<feature type="chain" id="PRO_0000048994" description="Homeobox protein ceh-24">
    <location>
        <begin position="1"/>
        <end position="293"/>
    </location>
</feature>
<feature type="DNA-binding region" description="Homeobox" evidence="2">
    <location>
        <begin position="144"/>
        <end position="203"/>
    </location>
</feature>
<feature type="region of interest" description="Disordered" evidence="3">
    <location>
        <begin position="1"/>
        <end position="38"/>
    </location>
</feature>
<feature type="region of interest" description="Disordered" evidence="3">
    <location>
        <begin position="203"/>
        <end position="256"/>
    </location>
</feature>
<feature type="compositionally biased region" description="Basic and acidic residues" evidence="3">
    <location>
        <begin position="1"/>
        <end position="15"/>
    </location>
</feature>
<feature type="compositionally biased region" description="Basic and acidic residues" evidence="3">
    <location>
        <begin position="22"/>
        <end position="38"/>
    </location>
</feature>
<feature type="sequence conflict" description="In Ref. 1; AAB86603." evidence="5" ref="1">
    <original>Q</original>
    <variation>QG</variation>
    <location>
        <position position="107"/>
    </location>
</feature>
<feature type="sequence conflict" description="In Ref. 1; AAB86603." evidence="5" ref="1">
    <original>A</original>
    <variation>R</variation>
    <location>
        <position position="134"/>
    </location>
</feature>
<feature type="sequence conflict" description="In Ref. 1; AAB86603." evidence="5" ref="1">
    <original>C</original>
    <variation>S</variation>
    <location>
        <position position="218"/>
    </location>
</feature>
<feature type="sequence conflict" description="In Ref. 1; AAB86603." evidence="5" ref="1">
    <original>G</original>
    <variation>GNFQ</variation>
    <location>
        <position position="258"/>
    </location>
</feature>
<keyword id="KW-0217">Developmental protein</keyword>
<keyword id="KW-0238">DNA-binding</keyword>
<keyword id="KW-0371">Homeobox</keyword>
<keyword id="KW-0524">Neurogenesis</keyword>
<keyword id="KW-0539">Nucleus</keyword>
<keyword id="KW-1185">Reference proteome</keyword>
<keyword id="KW-0804">Transcription</keyword>
<keyword id="KW-0805">Transcription regulation</keyword>
<proteinExistence type="evidence at transcript level"/>
<evidence type="ECO:0000250" key="1">
    <source>
        <dbReference type="UniProtKB" id="Q9NLC2"/>
    </source>
</evidence>
<evidence type="ECO:0000255" key="2">
    <source>
        <dbReference type="PROSITE-ProRule" id="PRU00108"/>
    </source>
</evidence>
<evidence type="ECO:0000256" key="3">
    <source>
        <dbReference type="SAM" id="MobiDB-lite"/>
    </source>
</evidence>
<evidence type="ECO:0000269" key="4">
    <source>
    </source>
</evidence>
<evidence type="ECO:0000305" key="5"/>
<evidence type="ECO:0000312" key="6">
    <source>
        <dbReference type="WormBase" id="CBG11477"/>
    </source>
</evidence>
<comment type="function">
    <text evidence="1">Probable transcriptional regulator that is required in neural development for the normal formation of sublateral cholinergic motor neuron processes. Plays a role in regulating the expression of acetylcholine transporter protein unc-17 in the sublateral processes. In particular, it is required in sublateral motor neurons for a left-right turning behavior that occurs during the lethargus phase of the normal sleep process called 'flipping'. During 'flipping' animals rotate 180 degrees about their longitudinal axis.</text>
</comment>
<comment type="subcellular location">
    <subcellularLocation>
        <location evidence="2">Nucleus</location>
    </subcellularLocation>
</comment>
<comment type="tissue specificity">
    <text evidence="4">Expressed in the 8 vulval muscles, 8-10 ventral neurons in the head and in the most posterior pharyngeal muscle cell, m8.</text>
</comment>
<comment type="similarity">
    <text evidence="5">Belongs to the NK-2 homeobox family.</text>
</comment>
<protein>
    <recommendedName>
        <fullName>Homeobox protein ceh-24</fullName>
    </recommendedName>
</protein>
<gene>
    <name evidence="6" type="primary">ceh-24</name>
    <name evidence="6" type="ORF">CBG11477</name>
</gene>
<name>HM24_CAEBR</name>
<reference key="1">
    <citation type="journal article" date="1998" name="Development">
        <title>Muscle and nerve-specific regulation of a novel NK-2 class homeodomain factor in Caenorhabditis elegans.</title>
        <authorList>
            <person name="Harfe B.D."/>
            <person name="Fire A."/>
        </authorList>
    </citation>
    <scope>NUCLEOTIDE SEQUENCE [GENOMIC DNA]</scope>
    <scope>TISSUE SPECIFICITY</scope>
</reference>
<reference key="2">
    <citation type="journal article" date="2003" name="PLoS Biol.">
        <title>The genome sequence of Caenorhabditis briggsae: a platform for comparative genomics.</title>
        <authorList>
            <person name="Stein L.D."/>
            <person name="Bao Z."/>
            <person name="Blasiar D."/>
            <person name="Blumenthal T."/>
            <person name="Brent M.R."/>
            <person name="Chen N."/>
            <person name="Chinwalla A."/>
            <person name="Clarke L."/>
            <person name="Clee C."/>
            <person name="Coghlan A."/>
            <person name="Coulson A."/>
            <person name="D'Eustachio P."/>
            <person name="Fitch D.H.A."/>
            <person name="Fulton L.A."/>
            <person name="Fulton R.E."/>
            <person name="Griffiths-Jones S."/>
            <person name="Harris T.W."/>
            <person name="Hillier L.W."/>
            <person name="Kamath R."/>
            <person name="Kuwabara P.E."/>
            <person name="Mardis E.R."/>
            <person name="Marra M.A."/>
            <person name="Miner T.L."/>
            <person name="Minx P."/>
            <person name="Mullikin J.C."/>
            <person name="Plumb R.W."/>
            <person name="Rogers J."/>
            <person name="Schein J.E."/>
            <person name="Sohrmann M."/>
            <person name="Spieth J."/>
            <person name="Stajich J.E."/>
            <person name="Wei C."/>
            <person name="Willey D."/>
            <person name="Wilson R.K."/>
            <person name="Durbin R.M."/>
            <person name="Waterston R.H."/>
        </authorList>
    </citation>
    <scope>NUCLEOTIDE SEQUENCE [LARGE SCALE GENOMIC DNA]</scope>
    <source>
        <strain>AF16</strain>
    </source>
</reference>
<organism>
    <name type="scientific">Caenorhabditis briggsae</name>
    <dbReference type="NCBI Taxonomy" id="6238"/>
    <lineage>
        <taxon>Eukaryota</taxon>
        <taxon>Metazoa</taxon>
        <taxon>Ecdysozoa</taxon>
        <taxon>Nematoda</taxon>
        <taxon>Chromadorea</taxon>
        <taxon>Rhabditida</taxon>
        <taxon>Rhabditina</taxon>
        <taxon>Rhabditomorpha</taxon>
        <taxon>Rhabditoidea</taxon>
        <taxon>Rhabditidae</taxon>
        <taxon>Peloderinae</taxon>
        <taxon>Caenorhabditis</taxon>
    </lineage>
</organism>
<dbReference type="EMBL" id="AF026057">
    <property type="protein sequence ID" value="AAB86603.1"/>
    <property type="molecule type" value="Genomic_DNA"/>
</dbReference>
<dbReference type="EMBL" id="HE600908">
    <property type="protein sequence ID" value="CAP30490.3"/>
    <property type="molecule type" value="Genomic_DNA"/>
</dbReference>
<dbReference type="SMR" id="O17319"/>
<dbReference type="FunCoup" id="O17319">
    <property type="interactions" value="101"/>
</dbReference>
<dbReference type="STRING" id="6238.O17319"/>
<dbReference type="WormBase" id="CBG11477">
    <property type="protein sequence ID" value="CBP42339"/>
    <property type="gene ID" value="WBGene00032588"/>
    <property type="gene designation" value="Cbr-ceh-24"/>
</dbReference>
<dbReference type="eggNOG" id="KOG0842">
    <property type="taxonomic scope" value="Eukaryota"/>
</dbReference>
<dbReference type="HOGENOM" id="CLU_918976_0_0_1"/>
<dbReference type="InParanoid" id="O17319"/>
<dbReference type="OMA" id="SAINHQF"/>
<dbReference type="Proteomes" id="UP000008549">
    <property type="component" value="Unassembled WGS sequence"/>
</dbReference>
<dbReference type="GO" id="GO:0005634">
    <property type="term" value="C:nucleus"/>
    <property type="evidence" value="ECO:0000318"/>
    <property type="project" value="GO_Central"/>
</dbReference>
<dbReference type="GO" id="GO:0000981">
    <property type="term" value="F:DNA-binding transcription factor activity, RNA polymerase II-specific"/>
    <property type="evidence" value="ECO:0000318"/>
    <property type="project" value="GO_Central"/>
</dbReference>
<dbReference type="GO" id="GO:0000978">
    <property type="term" value="F:RNA polymerase II cis-regulatory region sequence-specific DNA binding"/>
    <property type="evidence" value="ECO:0000318"/>
    <property type="project" value="GO_Central"/>
</dbReference>
<dbReference type="GO" id="GO:0030154">
    <property type="term" value="P:cell differentiation"/>
    <property type="evidence" value="ECO:0000318"/>
    <property type="project" value="GO_Central"/>
</dbReference>
<dbReference type="GO" id="GO:0007399">
    <property type="term" value="P:nervous system development"/>
    <property type="evidence" value="ECO:0007669"/>
    <property type="project" value="UniProtKB-KW"/>
</dbReference>
<dbReference type="GO" id="GO:0006357">
    <property type="term" value="P:regulation of transcription by RNA polymerase II"/>
    <property type="evidence" value="ECO:0000318"/>
    <property type="project" value="GO_Central"/>
</dbReference>
<dbReference type="CDD" id="cd00086">
    <property type="entry name" value="homeodomain"/>
    <property type="match status" value="1"/>
</dbReference>
<dbReference type="FunFam" id="1.10.10.60:FF:000296">
    <property type="entry name" value="Scarecrow, isoform A"/>
    <property type="match status" value="1"/>
</dbReference>
<dbReference type="Gene3D" id="1.10.10.60">
    <property type="entry name" value="Homeodomain-like"/>
    <property type="match status" value="1"/>
</dbReference>
<dbReference type="InterPro" id="IPR001356">
    <property type="entry name" value="HD"/>
</dbReference>
<dbReference type="InterPro" id="IPR020479">
    <property type="entry name" value="HD_metazoa"/>
</dbReference>
<dbReference type="InterPro" id="IPR017970">
    <property type="entry name" value="Homeobox_CS"/>
</dbReference>
<dbReference type="InterPro" id="IPR050394">
    <property type="entry name" value="Homeobox_NK-like"/>
</dbReference>
<dbReference type="InterPro" id="IPR009057">
    <property type="entry name" value="Homeodomain-like_sf"/>
</dbReference>
<dbReference type="PANTHER" id="PTHR24340">
    <property type="entry name" value="HOMEOBOX PROTEIN NKX"/>
    <property type="match status" value="1"/>
</dbReference>
<dbReference type="PANTHER" id="PTHR24340:SF41">
    <property type="entry name" value="MUSCLE-SPECIFIC HOMEOBOX PROTEIN TINMAN-RELATED"/>
    <property type="match status" value="1"/>
</dbReference>
<dbReference type="Pfam" id="PF00046">
    <property type="entry name" value="Homeodomain"/>
    <property type="match status" value="1"/>
</dbReference>
<dbReference type="PRINTS" id="PR00024">
    <property type="entry name" value="HOMEOBOX"/>
</dbReference>
<dbReference type="SMART" id="SM00389">
    <property type="entry name" value="HOX"/>
    <property type="match status" value="1"/>
</dbReference>
<dbReference type="SUPFAM" id="SSF46689">
    <property type="entry name" value="Homeodomain-like"/>
    <property type="match status" value="1"/>
</dbReference>
<dbReference type="PROSITE" id="PS00027">
    <property type="entry name" value="HOMEOBOX_1"/>
    <property type="match status" value="1"/>
</dbReference>
<dbReference type="PROSITE" id="PS50071">
    <property type="entry name" value="HOMEOBOX_2"/>
    <property type="match status" value="1"/>
</dbReference>
<sequence length="293" mass="32371">MSEKESPSPQHKKDEVVDDTEQETKDSEDDATKKMKIKEGSKFTMNSILSPLESLARVQQQLLKMAAAQSGFGGNGSGGNGANGFPYPARFATNCFSGPFPGYNGSQNWYNGNDARFAAAAALLPCAIDPVRSAINHQFSMSQRRKRRVLFSQAQVYELERRFKQAKYLTAPEREQLANSIRLTPTQVKIWFQNHRYKCKRQEKEKAMSGLGHGDDGCSPPPGDDDDDDDKYSIEMDDKDDEEEDGAKPMLKSNGVFGLPYPSPANAAAAAAAAAFNFQFGAQGPNPAYFMRW</sequence>
<accession>O17319</accession>
<accession>A8XCX2</accession>
<accession>Q61FW0</accession>